<proteinExistence type="inferred from homology"/>
<feature type="chain" id="PRO_0000211672" description="Cell division protein ZapD">
    <location>
        <begin position="1"/>
        <end position="255"/>
    </location>
</feature>
<sequence length="255" mass="28765">MKNQIVYEFPLNERMRLFMRLEQLFRQARHFNQGGSVWDCRAVVATLNEIVALLARNDIKSELLKELDRLGGGLGKMQGNQHIDQAALATVLGQIDAAAQRIYGHSGRIGYQVMENELFKSVAQRTAIPGGTCSFDLPGYHFWLERDVERRRNEATEWLDCFHPVQEGIALILGLLRDSAAGIWETAHGGFFQKNLDHAAAVQLLRVAVPIELPYFAEISGSKHRFTVRFLTGLSNERPVQCSEDVPFQLTVCLL</sequence>
<accession>Q606C7</accession>
<protein>
    <recommendedName>
        <fullName evidence="1">Cell division protein ZapD</fullName>
    </recommendedName>
    <alternativeName>
        <fullName evidence="1">Z ring-associated protein D</fullName>
    </alternativeName>
</protein>
<name>ZAPD_METCA</name>
<reference key="1">
    <citation type="journal article" date="2004" name="PLoS Biol.">
        <title>Genomic insights into methanotrophy: the complete genome sequence of Methylococcus capsulatus (Bath).</title>
        <authorList>
            <person name="Ward N.L."/>
            <person name="Larsen O."/>
            <person name="Sakwa J."/>
            <person name="Bruseth L."/>
            <person name="Khouri H.M."/>
            <person name="Durkin A.S."/>
            <person name="Dimitrov G."/>
            <person name="Jiang L."/>
            <person name="Scanlan D."/>
            <person name="Kang K.H."/>
            <person name="Lewis M.R."/>
            <person name="Nelson K.E."/>
            <person name="Methe B.A."/>
            <person name="Wu M."/>
            <person name="Heidelberg J.F."/>
            <person name="Paulsen I.T."/>
            <person name="Fouts D.E."/>
            <person name="Ravel J."/>
            <person name="Tettelin H."/>
            <person name="Ren Q."/>
            <person name="Read T.D."/>
            <person name="DeBoy R.T."/>
            <person name="Seshadri R."/>
            <person name="Salzberg S.L."/>
            <person name="Jensen H.B."/>
            <person name="Birkeland N.K."/>
            <person name="Nelson W.C."/>
            <person name="Dodson R.J."/>
            <person name="Grindhaug S.H."/>
            <person name="Holt I.E."/>
            <person name="Eidhammer I."/>
            <person name="Jonasen I."/>
            <person name="Vanaken S."/>
            <person name="Utterback T.R."/>
            <person name="Feldblyum T.V."/>
            <person name="Fraser C.M."/>
            <person name="Lillehaug J.R."/>
            <person name="Eisen J.A."/>
        </authorList>
    </citation>
    <scope>NUCLEOTIDE SEQUENCE [LARGE SCALE GENOMIC DNA]</scope>
    <source>
        <strain>ATCC 33009 / NCIMB 11132 / Bath</strain>
    </source>
</reference>
<keyword id="KW-0131">Cell cycle</keyword>
<keyword id="KW-0132">Cell division</keyword>
<keyword id="KW-0963">Cytoplasm</keyword>
<keyword id="KW-1185">Reference proteome</keyword>
<keyword id="KW-0717">Septation</keyword>
<gene>
    <name evidence="1" type="primary">zapD</name>
    <name type="ordered locus">MCA2091</name>
</gene>
<organism>
    <name type="scientific">Methylococcus capsulatus (strain ATCC 33009 / NCIMB 11132 / Bath)</name>
    <dbReference type="NCBI Taxonomy" id="243233"/>
    <lineage>
        <taxon>Bacteria</taxon>
        <taxon>Pseudomonadati</taxon>
        <taxon>Pseudomonadota</taxon>
        <taxon>Gammaproteobacteria</taxon>
        <taxon>Methylococcales</taxon>
        <taxon>Methylococcaceae</taxon>
        <taxon>Methylococcus</taxon>
    </lineage>
</organism>
<comment type="function">
    <text evidence="1">Cell division factor that enhances FtsZ-ring assembly. Directly interacts with FtsZ and promotes bundling of FtsZ protofilaments, with a reduction in FtsZ GTPase activity.</text>
</comment>
<comment type="subunit">
    <text evidence="1">Interacts with FtsZ.</text>
</comment>
<comment type="subcellular location">
    <subcellularLocation>
        <location evidence="1">Cytoplasm</location>
    </subcellularLocation>
    <text evidence="1">Localizes to mid-cell in an FtsZ-dependent manner.</text>
</comment>
<comment type="similarity">
    <text evidence="1">Belongs to the ZapD family.</text>
</comment>
<dbReference type="EMBL" id="AE017282">
    <property type="protein sequence ID" value="AAU91917.1"/>
    <property type="molecule type" value="Genomic_DNA"/>
</dbReference>
<dbReference type="RefSeq" id="WP_010961334.1">
    <property type="nucleotide sequence ID" value="NC_002977.6"/>
</dbReference>
<dbReference type="SMR" id="Q606C7"/>
<dbReference type="STRING" id="243233.MCA2091"/>
<dbReference type="GeneID" id="88224315"/>
<dbReference type="KEGG" id="mca:MCA2091"/>
<dbReference type="eggNOG" id="COG4582">
    <property type="taxonomic scope" value="Bacteria"/>
</dbReference>
<dbReference type="HOGENOM" id="CLU_076303_0_1_6"/>
<dbReference type="Proteomes" id="UP000006821">
    <property type="component" value="Chromosome"/>
</dbReference>
<dbReference type="GO" id="GO:0032153">
    <property type="term" value="C:cell division site"/>
    <property type="evidence" value="ECO:0007669"/>
    <property type="project" value="TreeGrafter"/>
</dbReference>
<dbReference type="GO" id="GO:0005737">
    <property type="term" value="C:cytoplasm"/>
    <property type="evidence" value="ECO:0007669"/>
    <property type="project" value="UniProtKB-SubCell"/>
</dbReference>
<dbReference type="GO" id="GO:0000917">
    <property type="term" value="P:division septum assembly"/>
    <property type="evidence" value="ECO:0007669"/>
    <property type="project" value="UniProtKB-KW"/>
</dbReference>
<dbReference type="GO" id="GO:0043093">
    <property type="term" value="P:FtsZ-dependent cytokinesis"/>
    <property type="evidence" value="ECO:0007669"/>
    <property type="project" value="UniProtKB-UniRule"/>
</dbReference>
<dbReference type="Gene3D" id="1.10.3900.10">
    <property type="entry name" value="YacF-like"/>
    <property type="match status" value="1"/>
</dbReference>
<dbReference type="Gene3D" id="2.60.440.10">
    <property type="entry name" value="YacF-like domains"/>
    <property type="match status" value="1"/>
</dbReference>
<dbReference type="HAMAP" id="MF_01092">
    <property type="entry name" value="ZapD"/>
    <property type="match status" value="1"/>
</dbReference>
<dbReference type="InterPro" id="IPR009777">
    <property type="entry name" value="ZapD"/>
</dbReference>
<dbReference type="InterPro" id="IPR027462">
    <property type="entry name" value="ZapD_C"/>
</dbReference>
<dbReference type="InterPro" id="IPR036268">
    <property type="entry name" value="ZapD_sf"/>
</dbReference>
<dbReference type="NCBIfam" id="NF003656">
    <property type="entry name" value="PRK05287.1-4"/>
    <property type="match status" value="1"/>
</dbReference>
<dbReference type="PANTHER" id="PTHR39455">
    <property type="entry name" value="CELL DIVISION PROTEIN ZAPD"/>
    <property type="match status" value="1"/>
</dbReference>
<dbReference type="PANTHER" id="PTHR39455:SF1">
    <property type="entry name" value="CELL DIVISION PROTEIN ZAPD"/>
    <property type="match status" value="1"/>
</dbReference>
<dbReference type="Pfam" id="PF07072">
    <property type="entry name" value="ZapD"/>
    <property type="match status" value="1"/>
</dbReference>
<dbReference type="SUPFAM" id="SSF160950">
    <property type="entry name" value="YacF-like"/>
    <property type="match status" value="1"/>
</dbReference>
<evidence type="ECO:0000255" key="1">
    <source>
        <dbReference type="HAMAP-Rule" id="MF_01092"/>
    </source>
</evidence>